<sequence>MAGTNPRAARIAALIQRVVASSIERELHDKRLASITVTEVRVTNDLQIAKVYWTQLGHEGHEEGERKRAQQALDQAKGHLRSLVGHKAGLRLTPQLQFVFDEVPGEAHEIEDILAVAKKRDEELARARATAQYAGDADPYKHDDEPSDDFEDDSDEE</sequence>
<feature type="chain" id="PRO_1000088859" description="Ribosome-binding factor A">
    <location>
        <begin position="1"/>
        <end position="157"/>
    </location>
</feature>
<feature type="region of interest" description="Disordered" evidence="2">
    <location>
        <begin position="126"/>
        <end position="157"/>
    </location>
</feature>
<feature type="compositionally biased region" description="Acidic residues" evidence="2">
    <location>
        <begin position="145"/>
        <end position="157"/>
    </location>
</feature>
<reference key="1">
    <citation type="journal article" date="2008" name="BMC Genomics">
        <title>Comparative genomic analysis of the gut bacterium Bifidobacterium longum reveals loci susceptible to deletion during pure culture growth.</title>
        <authorList>
            <person name="Lee J.H."/>
            <person name="Karamychev V.N."/>
            <person name="Kozyavkin S.A."/>
            <person name="Mills D."/>
            <person name="Pavlov A.R."/>
            <person name="Pavlova N.V."/>
            <person name="Polouchine N.N."/>
            <person name="Richardson P.M."/>
            <person name="Shakhova V.V."/>
            <person name="Slesarev A.I."/>
            <person name="Weimer B."/>
            <person name="O'Sullivan D.J."/>
        </authorList>
    </citation>
    <scope>NUCLEOTIDE SEQUENCE [LARGE SCALE GENOMIC DNA]</scope>
    <source>
        <strain>DJO10A</strain>
    </source>
</reference>
<accession>B3DQF1</accession>
<comment type="function">
    <text evidence="1">One of several proteins that assist in the late maturation steps of the functional core of the 30S ribosomal subunit. Associates with free 30S ribosomal subunits (but not with 30S subunits that are part of 70S ribosomes or polysomes). Required for efficient processing of 16S rRNA. May interact with the 5'-terminal helix region of 16S rRNA.</text>
</comment>
<comment type="subunit">
    <text evidence="1">Monomer. Binds 30S ribosomal subunits, but not 50S ribosomal subunits or 70S ribosomes.</text>
</comment>
<comment type="subcellular location">
    <subcellularLocation>
        <location evidence="1">Cytoplasm</location>
    </subcellularLocation>
</comment>
<comment type="similarity">
    <text evidence="1">Belongs to the RbfA family.</text>
</comment>
<dbReference type="EMBL" id="CP000605">
    <property type="protein sequence ID" value="ACD99189.1"/>
    <property type="molecule type" value="Genomic_DNA"/>
</dbReference>
<dbReference type="RefSeq" id="WP_007052308.1">
    <property type="nucleotide sequence ID" value="NZ_AABM02000016.1"/>
</dbReference>
<dbReference type="SMR" id="B3DQF1"/>
<dbReference type="GeneID" id="69578860"/>
<dbReference type="KEGG" id="blj:BLD_1744"/>
<dbReference type="HOGENOM" id="CLU_089475_0_0_11"/>
<dbReference type="Proteomes" id="UP000002419">
    <property type="component" value="Chromosome"/>
</dbReference>
<dbReference type="GO" id="GO:0005829">
    <property type="term" value="C:cytosol"/>
    <property type="evidence" value="ECO:0007669"/>
    <property type="project" value="TreeGrafter"/>
</dbReference>
<dbReference type="GO" id="GO:0043024">
    <property type="term" value="F:ribosomal small subunit binding"/>
    <property type="evidence" value="ECO:0007669"/>
    <property type="project" value="TreeGrafter"/>
</dbReference>
<dbReference type="GO" id="GO:0030490">
    <property type="term" value="P:maturation of SSU-rRNA"/>
    <property type="evidence" value="ECO:0007669"/>
    <property type="project" value="UniProtKB-UniRule"/>
</dbReference>
<dbReference type="Gene3D" id="3.30.300.20">
    <property type="match status" value="1"/>
</dbReference>
<dbReference type="HAMAP" id="MF_00003">
    <property type="entry name" value="RbfA"/>
    <property type="match status" value="1"/>
</dbReference>
<dbReference type="InterPro" id="IPR015946">
    <property type="entry name" value="KH_dom-like_a/b"/>
</dbReference>
<dbReference type="InterPro" id="IPR000238">
    <property type="entry name" value="RbfA"/>
</dbReference>
<dbReference type="InterPro" id="IPR023799">
    <property type="entry name" value="RbfA_dom_sf"/>
</dbReference>
<dbReference type="InterPro" id="IPR020053">
    <property type="entry name" value="Ribosome-bd_factorA_CS"/>
</dbReference>
<dbReference type="NCBIfam" id="TIGR00082">
    <property type="entry name" value="rbfA"/>
    <property type="match status" value="1"/>
</dbReference>
<dbReference type="PANTHER" id="PTHR33515">
    <property type="entry name" value="RIBOSOME-BINDING FACTOR A, CHLOROPLASTIC-RELATED"/>
    <property type="match status" value="1"/>
</dbReference>
<dbReference type="PANTHER" id="PTHR33515:SF1">
    <property type="entry name" value="RIBOSOME-BINDING FACTOR A, CHLOROPLASTIC-RELATED"/>
    <property type="match status" value="1"/>
</dbReference>
<dbReference type="Pfam" id="PF02033">
    <property type="entry name" value="RBFA"/>
    <property type="match status" value="1"/>
</dbReference>
<dbReference type="SUPFAM" id="SSF89919">
    <property type="entry name" value="Ribosome-binding factor A, RbfA"/>
    <property type="match status" value="1"/>
</dbReference>
<dbReference type="PROSITE" id="PS01319">
    <property type="entry name" value="RBFA"/>
    <property type="match status" value="1"/>
</dbReference>
<proteinExistence type="inferred from homology"/>
<keyword id="KW-0963">Cytoplasm</keyword>
<keyword id="KW-0690">Ribosome biogenesis</keyword>
<protein>
    <recommendedName>
        <fullName evidence="1">Ribosome-binding factor A</fullName>
    </recommendedName>
</protein>
<evidence type="ECO:0000255" key="1">
    <source>
        <dbReference type="HAMAP-Rule" id="MF_00003"/>
    </source>
</evidence>
<evidence type="ECO:0000256" key="2">
    <source>
        <dbReference type="SAM" id="MobiDB-lite"/>
    </source>
</evidence>
<organism>
    <name type="scientific">Bifidobacterium longum (strain DJO10A)</name>
    <dbReference type="NCBI Taxonomy" id="205913"/>
    <lineage>
        <taxon>Bacteria</taxon>
        <taxon>Bacillati</taxon>
        <taxon>Actinomycetota</taxon>
        <taxon>Actinomycetes</taxon>
        <taxon>Bifidobacteriales</taxon>
        <taxon>Bifidobacteriaceae</taxon>
        <taxon>Bifidobacterium</taxon>
    </lineage>
</organism>
<gene>
    <name evidence="1" type="primary">rbfA</name>
    <name type="ordered locus">BLD_1744</name>
</gene>
<name>RBFA_BIFLD</name>